<organism>
    <name type="scientific">Aedes aegypti</name>
    <name type="common">Yellowfever mosquito</name>
    <name type="synonym">Culex aegypti</name>
    <dbReference type="NCBI Taxonomy" id="7159"/>
    <lineage>
        <taxon>Eukaryota</taxon>
        <taxon>Metazoa</taxon>
        <taxon>Ecdysozoa</taxon>
        <taxon>Arthropoda</taxon>
        <taxon>Hexapoda</taxon>
        <taxon>Insecta</taxon>
        <taxon>Pterygota</taxon>
        <taxon>Neoptera</taxon>
        <taxon>Endopterygota</taxon>
        <taxon>Diptera</taxon>
        <taxon>Nematocera</taxon>
        <taxon>Culicoidea</taxon>
        <taxon>Culicidae</taxon>
        <taxon>Culicinae</taxon>
        <taxon>Aedini</taxon>
        <taxon>Aedes</taxon>
        <taxon>Stegomyia</taxon>
    </lineage>
</organism>
<reference evidence="4" key="1">
    <citation type="journal article" date="2007" name="BMC Genomics">
        <title>An annotated catalogue of salivary gland transcripts in the adult female mosquito, Aedes aegypti.</title>
        <authorList>
            <person name="Ribeiro J.M.C."/>
            <person name="Arca B."/>
            <person name="Lombardo F."/>
            <person name="Calvo E."/>
            <person name="Phan V.M."/>
            <person name="Chandra P.K."/>
            <person name="Wikel S.K."/>
        </authorList>
    </citation>
    <scope>NUCLEOTIDE SEQUENCE [LARGE SCALE MRNA]</scope>
    <source>
        <strain>Black-eyed Liverpool</strain>
        <tissue>Salivary gland</tissue>
    </source>
</reference>
<reference evidence="5" key="2">
    <citation type="submission" date="2007-12" db="EMBL/GenBank/DDBJ databases">
        <title>The mitochondrial genome of the Yellow fever mosquito - Aedes aegypti.</title>
        <authorList>
            <person name="Lobo N.F."/>
            <person name="Lovin D."/>
            <person name="DeBruyn B."/>
            <person name="Puiu D."/>
            <person name="Shumway M."/>
            <person name="Haas B."/>
            <person name="Nene V."/>
            <person name="Severson D.W."/>
        </authorList>
    </citation>
    <scope>NUCLEOTIDE SEQUENCE [LARGE SCALE GENOMIC DNA]</scope>
    <source>
        <strain evidence="5">LVPib12</strain>
    </source>
</reference>
<feature type="chain" id="PRO_0000347266" description="ATP synthase subunit a">
    <location>
        <begin position="1"/>
        <end position="226"/>
    </location>
</feature>
<feature type="transmembrane region" description="Helical" evidence="2">
    <location>
        <begin position="18"/>
        <end position="38"/>
    </location>
</feature>
<feature type="transmembrane region" description="Helical" evidence="2">
    <location>
        <begin position="74"/>
        <end position="94"/>
    </location>
</feature>
<feature type="transmembrane region" description="Helical" evidence="2">
    <location>
        <begin position="100"/>
        <end position="120"/>
    </location>
</feature>
<feature type="transmembrane region" description="Helical" evidence="2">
    <location>
        <begin position="162"/>
        <end position="182"/>
    </location>
</feature>
<feature type="transmembrane region" description="Helical" evidence="2">
    <location>
        <begin position="187"/>
        <end position="207"/>
    </location>
</feature>
<accession>Q1HRS5</accession>
<evidence type="ECO:0000250" key="1">
    <source>
        <dbReference type="UniProtKB" id="P00850"/>
    </source>
</evidence>
<evidence type="ECO:0000255" key="2"/>
<evidence type="ECO:0000305" key="3"/>
<evidence type="ECO:0000312" key="4">
    <source>
        <dbReference type="EMBL" id="ABF18052.1"/>
    </source>
</evidence>
<evidence type="ECO:0000312" key="5">
    <source>
        <dbReference type="EMBL" id="ABY51627.1"/>
    </source>
</evidence>
<dbReference type="EMBL" id="DQ440019">
    <property type="protein sequence ID" value="ABF18052.1"/>
    <property type="molecule type" value="mRNA"/>
</dbReference>
<dbReference type="EMBL" id="EU352212">
    <property type="protein sequence ID" value="ABY51627.1"/>
    <property type="molecule type" value="Genomic_DNA"/>
</dbReference>
<dbReference type="RefSeq" id="YP_001649166.1">
    <property type="nucleotide sequence ID" value="NC_010241.1"/>
</dbReference>
<dbReference type="SMR" id="Q1HRS5"/>
<dbReference type="FunCoup" id="Q1HRS5">
    <property type="interactions" value="134"/>
</dbReference>
<dbReference type="STRING" id="7159.Q1HRS5"/>
<dbReference type="PaxDb" id="7159-AAEL018668-PA"/>
<dbReference type="EnsemblMetazoa" id="AAEL018668-RA">
    <property type="protein sequence ID" value="AAEL018668-PA"/>
    <property type="gene ID" value="AAEL018668"/>
</dbReference>
<dbReference type="VEuPathDB" id="VectorBase:AAEL018668"/>
<dbReference type="eggNOG" id="KOG4665">
    <property type="taxonomic scope" value="Eukaryota"/>
</dbReference>
<dbReference type="HOGENOM" id="CLU_041018_0_2_1"/>
<dbReference type="InParanoid" id="Q1HRS5"/>
<dbReference type="OrthoDB" id="10068504at2759"/>
<dbReference type="Proteomes" id="UP000008820">
    <property type="component" value="Mitochondrion MT"/>
</dbReference>
<dbReference type="Proteomes" id="UP000682892">
    <property type="component" value="Mitochondrion MT"/>
</dbReference>
<dbReference type="GO" id="GO:0005743">
    <property type="term" value="C:mitochondrial inner membrane"/>
    <property type="evidence" value="ECO:0007669"/>
    <property type="project" value="UniProtKB-SubCell"/>
</dbReference>
<dbReference type="GO" id="GO:0045259">
    <property type="term" value="C:proton-transporting ATP synthase complex"/>
    <property type="evidence" value="ECO:0007669"/>
    <property type="project" value="UniProtKB-KW"/>
</dbReference>
<dbReference type="GO" id="GO:0046933">
    <property type="term" value="F:proton-transporting ATP synthase activity, rotational mechanism"/>
    <property type="evidence" value="ECO:0007669"/>
    <property type="project" value="TreeGrafter"/>
</dbReference>
<dbReference type="CDD" id="cd00310">
    <property type="entry name" value="ATP-synt_Fo_a_6"/>
    <property type="match status" value="1"/>
</dbReference>
<dbReference type="FunFam" id="1.20.120.220:FF:000008">
    <property type="entry name" value="ATP synthase subunit a"/>
    <property type="match status" value="1"/>
</dbReference>
<dbReference type="Gene3D" id="1.20.120.220">
    <property type="entry name" value="ATP synthase, F0 complex, subunit A"/>
    <property type="match status" value="1"/>
</dbReference>
<dbReference type="InterPro" id="IPR000568">
    <property type="entry name" value="ATP_synth_F0_asu"/>
</dbReference>
<dbReference type="InterPro" id="IPR023011">
    <property type="entry name" value="ATP_synth_F0_asu_AS"/>
</dbReference>
<dbReference type="InterPro" id="IPR045083">
    <property type="entry name" value="ATP_synth_F0_asu_bact/mt"/>
</dbReference>
<dbReference type="InterPro" id="IPR035908">
    <property type="entry name" value="F0_ATP_A_sf"/>
</dbReference>
<dbReference type="NCBIfam" id="TIGR01131">
    <property type="entry name" value="ATP_synt_6_or_A"/>
    <property type="match status" value="1"/>
</dbReference>
<dbReference type="PANTHER" id="PTHR11410">
    <property type="entry name" value="ATP SYNTHASE SUBUNIT A"/>
    <property type="match status" value="1"/>
</dbReference>
<dbReference type="PANTHER" id="PTHR11410:SF0">
    <property type="entry name" value="ATP SYNTHASE SUBUNIT A"/>
    <property type="match status" value="1"/>
</dbReference>
<dbReference type="Pfam" id="PF00119">
    <property type="entry name" value="ATP-synt_A"/>
    <property type="match status" value="1"/>
</dbReference>
<dbReference type="PRINTS" id="PR00123">
    <property type="entry name" value="ATPASEA"/>
</dbReference>
<dbReference type="SUPFAM" id="SSF81336">
    <property type="entry name" value="F1F0 ATP synthase subunit A"/>
    <property type="match status" value="1"/>
</dbReference>
<dbReference type="PROSITE" id="PS00449">
    <property type="entry name" value="ATPASE_A"/>
    <property type="match status" value="1"/>
</dbReference>
<protein>
    <recommendedName>
        <fullName>ATP synthase subunit a</fullName>
    </recommendedName>
    <alternativeName>
        <fullName>F-ATPase protein 6</fullName>
    </alternativeName>
</protein>
<proteinExistence type="evidence at transcript level"/>
<sequence>MMTNLFSVFDPSTTILNLSLNWLSTFLGLLIIPSTYWLMPNRFQIIWNNILLTLHKEFKTLLGPNGHNGSTLMFVSLFSLIMFNNFLGLFPYIFTSTSHLTLTLTLAFPLWLSFMLYGWICHTQHMFAHLVPQGTPPVLMPFMVCIETISNVIRPGTLAVRLTANMIAGHLLMTLLGNTGPMSTSYIILSLILITQIALLVLESAVAIIQSYVFAVLSTLYSSEVN</sequence>
<gene>
    <name evidence="1" type="primary">mt:ATPase6</name>
    <name evidence="5" type="synonym">ATP6</name>
</gene>
<name>ATP6_AEDAE</name>
<comment type="function">
    <text>Mitochondrial membrane ATP synthase (F(1)F(0) ATP synthase or Complex V) produces ATP from ADP in the presence of a proton gradient across the membrane which is generated by electron transport complexes of the respiratory chain. F-type ATPases consist of two structural domains, F(1) - containing the extramembraneous catalytic core and F(0) - containing the membrane proton channel, linked together by a central stalk and a peripheral stalk. During catalysis, ATP synthesis in the catalytic domain of F(1) is coupled via a rotary mechanism of the central stalk subunits to proton translocation. Key component of the proton channel; it may play a direct role in the translocation of protons across the membrane.</text>
</comment>
<comment type="subunit">
    <text evidence="3">F-type ATPases have 2 components, CF(1) - the catalytic core - and CF(0) - the membrane proton channel. CF(1) has five subunits: alpha(3), beta(3), gamma(1), delta(1), epsilon(1). CF(0) has three main subunits: a, b and c.</text>
</comment>
<comment type="subcellular location">
    <subcellularLocation>
        <location evidence="2">Mitochondrion inner membrane</location>
        <topology evidence="2">Multi-pass membrane protein</topology>
    </subcellularLocation>
</comment>
<comment type="similarity">
    <text evidence="2">Belongs to the ATPase A chain family.</text>
</comment>
<geneLocation type="mitochondrion" evidence="4"/>
<keyword id="KW-0066">ATP synthesis</keyword>
<keyword id="KW-0138">CF(0)</keyword>
<keyword id="KW-0375">Hydrogen ion transport</keyword>
<keyword id="KW-0406">Ion transport</keyword>
<keyword id="KW-0472">Membrane</keyword>
<keyword id="KW-0496">Mitochondrion</keyword>
<keyword id="KW-0999">Mitochondrion inner membrane</keyword>
<keyword id="KW-1185">Reference proteome</keyword>
<keyword id="KW-0812">Transmembrane</keyword>
<keyword id="KW-1133">Transmembrane helix</keyword>
<keyword id="KW-0813">Transport</keyword>